<proteinExistence type="inferred from homology"/>
<organism>
    <name type="scientific">Deinococcus radiodurans (strain ATCC 13939 / DSM 20539 / JCM 16871 / CCUG 27074 / LMG 4051 / NBRC 15346 / NCIMB 9279 / VKM B-1422 / R1)</name>
    <dbReference type="NCBI Taxonomy" id="243230"/>
    <lineage>
        <taxon>Bacteria</taxon>
        <taxon>Thermotogati</taxon>
        <taxon>Deinococcota</taxon>
        <taxon>Deinococci</taxon>
        <taxon>Deinococcales</taxon>
        <taxon>Deinococcaceae</taxon>
        <taxon>Deinococcus</taxon>
    </lineage>
</organism>
<evidence type="ECO:0000255" key="1">
    <source>
        <dbReference type="HAMAP-Rule" id="MF_01351"/>
    </source>
</evidence>
<reference key="1">
    <citation type="journal article" date="1999" name="Science">
        <title>Genome sequence of the radioresistant bacterium Deinococcus radiodurans R1.</title>
        <authorList>
            <person name="White O."/>
            <person name="Eisen J.A."/>
            <person name="Heidelberg J.F."/>
            <person name="Hickey E.K."/>
            <person name="Peterson J.D."/>
            <person name="Dodson R.J."/>
            <person name="Haft D.H."/>
            <person name="Gwinn M.L."/>
            <person name="Nelson W.C."/>
            <person name="Richardson D.L."/>
            <person name="Moffat K.S."/>
            <person name="Qin H."/>
            <person name="Jiang L."/>
            <person name="Pamphile W."/>
            <person name="Crosby M."/>
            <person name="Shen M."/>
            <person name="Vamathevan J.J."/>
            <person name="Lam P."/>
            <person name="McDonald L.A."/>
            <person name="Utterback T.R."/>
            <person name="Zalewski C."/>
            <person name="Makarova K.S."/>
            <person name="Aravind L."/>
            <person name="Daly M.J."/>
            <person name="Minton K.W."/>
            <person name="Fleischmann R.D."/>
            <person name="Ketchum K.A."/>
            <person name="Nelson K.E."/>
            <person name="Salzberg S.L."/>
            <person name="Smith H.O."/>
            <person name="Venter J.C."/>
            <person name="Fraser C.M."/>
        </authorList>
    </citation>
    <scope>NUCLEOTIDE SEQUENCE [LARGE SCALE GENOMIC DNA]</scope>
    <source>
        <strain>ATCC 13939 / DSM 20539 / JCM 16871 / CCUG 27074 / LMG 4051 / NBRC 15346 / NCIMB 9279 / VKM B-1422 / R1</strain>
    </source>
</reference>
<keyword id="KW-0004">4Fe-4S</keyword>
<keyword id="KW-1003">Cell membrane</keyword>
<keyword id="KW-0408">Iron</keyword>
<keyword id="KW-0411">Iron-sulfur</keyword>
<keyword id="KW-0472">Membrane</keyword>
<keyword id="KW-0479">Metal-binding</keyword>
<keyword id="KW-0520">NAD</keyword>
<keyword id="KW-0874">Quinone</keyword>
<keyword id="KW-1185">Reference proteome</keyword>
<keyword id="KW-0677">Repeat</keyword>
<keyword id="KW-1278">Translocase</keyword>
<keyword id="KW-0830">Ubiquinone</keyword>
<sequence length="178" mass="19548">MGVLDIAKGMGVTLGKLFQKPLTVSYPEQRATLQPRFRGRHVLTRHPDTGLEKCIGCSLCAAACPAYAIYVEAAENDPRDPVSPGERYAKVYEINMLRCIFCGLCEEACPTGAVVLGNEFEMADYRSRDFVYGKEDMLVGVTGSRPQRREALSAGRPVRLGFQVEGGPRAELEGVEYP</sequence>
<dbReference type="EC" id="7.1.1.-" evidence="1"/>
<dbReference type="EMBL" id="AE000513">
    <property type="protein sequence ID" value="AAF11060.1"/>
    <property type="molecule type" value="Genomic_DNA"/>
</dbReference>
<dbReference type="PIR" id="D75390">
    <property type="entry name" value="D75390"/>
</dbReference>
<dbReference type="RefSeq" id="NP_295220.1">
    <property type="nucleotide sequence ID" value="NC_001263.1"/>
</dbReference>
<dbReference type="RefSeq" id="WP_010888136.1">
    <property type="nucleotide sequence ID" value="NC_001263.1"/>
</dbReference>
<dbReference type="SMR" id="Q9RU95"/>
<dbReference type="STRING" id="243230.DR_1497"/>
<dbReference type="PaxDb" id="243230-DR_1497"/>
<dbReference type="EnsemblBacteria" id="AAF11060">
    <property type="protein sequence ID" value="AAF11060"/>
    <property type="gene ID" value="DR_1497"/>
</dbReference>
<dbReference type="GeneID" id="69517736"/>
<dbReference type="KEGG" id="dra:DR_1497"/>
<dbReference type="PATRIC" id="fig|243230.17.peg.1699"/>
<dbReference type="eggNOG" id="COG1143">
    <property type="taxonomic scope" value="Bacteria"/>
</dbReference>
<dbReference type="HOGENOM" id="CLU_067218_4_3_0"/>
<dbReference type="InParanoid" id="Q9RU95"/>
<dbReference type="OrthoDB" id="9803192at2"/>
<dbReference type="Proteomes" id="UP000002524">
    <property type="component" value="Chromosome 1"/>
</dbReference>
<dbReference type="GO" id="GO:0005886">
    <property type="term" value="C:plasma membrane"/>
    <property type="evidence" value="ECO:0007669"/>
    <property type="project" value="UniProtKB-SubCell"/>
</dbReference>
<dbReference type="GO" id="GO:0051539">
    <property type="term" value="F:4 iron, 4 sulfur cluster binding"/>
    <property type="evidence" value="ECO:0007669"/>
    <property type="project" value="UniProtKB-KW"/>
</dbReference>
<dbReference type="GO" id="GO:0005506">
    <property type="term" value="F:iron ion binding"/>
    <property type="evidence" value="ECO:0007669"/>
    <property type="project" value="UniProtKB-UniRule"/>
</dbReference>
<dbReference type="GO" id="GO:0050136">
    <property type="term" value="F:NADH:ubiquinone reductase (non-electrogenic) activity"/>
    <property type="evidence" value="ECO:0007669"/>
    <property type="project" value="UniProtKB-UniRule"/>
</dbReference>
<dbReference type="GO" id="GO:0048038">
    <property type="term" value="F:quinone binding"/>
    <property type="evidence" value="ECO:0007669"/>
    <property type="project" value="UniProtKB-KW"/>
</dbReference>
<dbReference type="GO" id="GO:0009060">
    <property type="term" value="P:aerobic respiration"/>
    <property type="evidence" value="ECO:0000318"/>
    <property type="project" value="GO_Central"/>
</dbReference>
<dbReference type="FunFam" id="3.30.70.3270:FF:000007">
    <property type="entry name" value="NADH-quinone oxidoreductase subunit I"/>
    <property type="match status" value="1"/>
</dbReference>
<dbReference type="Gene3D" id="3.30.70.3270">
    <property type="match status" value="1"/>
</dbReference>
<dbReference type="HAMAP" id="MF_01351">
    <property type="entry name" value="NDH1_NuoI"/>
    <property type="match status" value="1"/>
</dbReference>
<dbReference type="InterPro" id="IPR017896">
    <property type="entry name" value="4Fe4S_Fe-S-bd"/>
</dbReference>
<dbReference type="InterPro" id="IPR017900">
    <property type="entry name" value="4Fe4S_Fe_S_CS"/>
</dbReference>
<dbReference type="InterPro" id="IPR010226">
    <property type="entry name" value="NADH_quinone_OxRdtase_chainI"/>
</dbReference>
<dbReference type="NCBIfam" id="TIGR01971">
    <property type="entry name" value="NuoI"/>
    <property type="match status" value="1"/>
</dbReference>
<dbReference type="NCBIfam" id="NF004537">
    <property type="entry name" value="PRK05888.1-3"/>
    <property type="match status" value="1"/>
</dbReference>
<dbReference type="PANTHER" id="PTHR10849:SF20">
    <property type="entry name" value="NADH DEHYDROGENASE [UBIQUINONE] IRON-SULFUR PROTEIN 8, MITOCHONDRIAL"/>
    <property type="match status" value="1"/>
</dbReference>
<dbReference type="PANTHER" id="PTHR10849">
    <property type="entry name" value="NADH DEHYDROGENASE UBIQUINONE IRON-SULFUR PROTEIN 8, MITOCHONDRIAL"/>
    <property type="match status" value="1"/>
</dbReference>
<dbReference type="Pfam" id="PF12838">
    <property type="entry name" value="Fer4_7"/>
    <property type="match status" value="1"/>
</dbReference>
<dbReference type="SUPFAM" id="SSF54862">
    <property type="entry name" value="4Fe-4S ferredoxins"/>
    <property type="match status" value="1"/>
</dbReference>
<dbReference type="PROSITE" id="PS00198">
    <property type="entry name" value="4FE4S_FER_1"/>
    <property type="match status" value="2"/>
</dbReference>
<dbReference type="PROSITE" id="PS51379">
    <property type="entry name" value="4FE4S_FER_2"/>
    <property type="match status" value="2"/>
</dbReference>
<accession>Q9RU95</accession>
<comment type="function">
    <text evidence="1">NDH-1 shuttles electrons from NADH, via FMN and iron-sulfur (Fe-S) centers, to quinones in the respiratory chain. The immediate electron acceptor for the enzyme in this species is believed to be ubiquinone. Couples the redox reaction to proton translocation (for every two electrons transferred, four hydrogen ions are translocated across the cytoplasmic membrane), and thus conserves the redox energy in a proton gradient.</text>
</comment>
<comment type="catalytic activity">
    <reaction evidence="1">
        <text>a quinone + NADH + 5 H(+)(in) = a quinol + NAD(+) + 4 H(+)(out)</text>
        <dbReference type="Rhea" id="RHEA:57888"/>
        <dbReference type="ChEBI" id="CHEBI:15378"/>
        <dbReference type="ChEBI" id="CHEBI:24646"/>
        <dbReference type="ChEBI" id="CHEBI:57540"/>
        <dbReference type="ChEBI" id="CHEBI:57945"/>
        <dbReference type="ChEBI" id="CHEBI:132124"/>
    </reaction>
</comment>
<comment type="cofactor">
    <cofactor evidence="1">
        <name>[4Fe-4S] cluster</name>
        <dbReference type="ChEBI" id="CHEBI:49883"/>
    </cofactor>
    <text evidence="1">Binds 2 [4Fe-4S] clusters per subunit.</text>
</comment>
<comment type="subunit">
    <text evidence="1">NDH-1 is composed of 15 different subunits. Subunits NuoA, H, J, K, L, M, N constitute the membrane sector of the complex.</text>
</comment>
<comment type="subcellular location">
    <subcellularLocation>
        <location evidence="1">Cell membrane</location>
        <topology evidence="1">Peripheral membrane protein</topology>
    </subcellularLocation>
</comment>
<comment type="similarity">
    <text evidence="1">Belongs to the complex I 23 kDa subunit family.</text>
</comment>
<name>NUOI_DEIRA</name>
<protein>
    <recommendedName>
        <fullName evidence="1">NADH-quinone oxidoreductase subunit I</fullName>
        <ecNumber evidence="1">7.1.1.-</ecNumber>
    </recommendedName>
    <alternativeName>
        <fullName evidence="1">NADH dehydrogenase I subunit I</fullName>
    </alternativeName>
    <alternativeName>
        <fullName evidence="1">NDH-1 subunit I</fullName>
    </alternativeName>
</protein>
<feature type="chain" id="PRO_0000245704" description="NADH-quinone oxidoreductase subunit I">
    <location>
        <begin position="1"/>
        <end position="178"/>
    </location>
</feature>
<feature type="domain" description="4Fe-4S ferredoxin-type 1" evidence="1">
    <location>
        <begin position="45"/>
        <end position="74"/>
    </location>
</feature>
<feature type="domain" description="4Fe-4S ferredoxin-type 2" evidence="1">
    <location>
        <begin position="90"/>
        <end position="119"/>
    </location>
</feature>
<feature type="binding site" evidence="1">
    <location>
        <position position="54"/>
    </location>
    <ligand>
        <name>[4Fe-4S] cluster</name>
        <dbReference type="ChEBI" id="CHEBI:49883"/>
        <label>1</label>
    </ligand>
</feature>
<feature type="binding site" evidence="1">
    <location>
        <position position="57"/>
    </location>
    <ligand>
        <name>[4Fe-4S] cluster</name>
        <dbReference type="ChEBI" id="CHEBI:49883"/>
        <label>1</label>
    </ligand>
</feature>
<feature type="binding site" evidence="1">
    <location>
        <position position="60"/>
    </location>
    <ligand>
        <name>[4Fe-4S] cluster</name>
        <dbReference type="ChEBI" id="CHEBI:49883"/>
        <label>1</label>
    </ligand>
</feature>
<feature type="binding site" evidence="1">
    <location>
        <position position="64"/>
    </location>
    <ligand>
        <name>[4Fe-4S] cluster</name>
        <dbReference type="ChEBI" id="CHEBI:49883"/>
        <label>2</label>
    </ligand>
</feature>
<feature type="binding site" evidence="1">
    <location>
        <position position="99"/>
    </location>
    <ligand>
        <name>[4Fe-4S] cluster</name>
        <dbReference type="ChEBI" id="CHEBI:49883"/>
        <label>2</label>
    </ligand>
</feature>
<feature type="binding site" evidence="1">
    <location>
        <position position="102"/>
    </location>
    <ligand>
        <name>[4Fe-4S] cluster</name>
        <dbReference type="ChEBI" id="CHEBI:49883"/>
        <label>2</label>
    </ligand>
</feature>
<feature type="binding site" evidence="1">
    <location>
        <position position="105"/>
    </location>
    <ligand>
        <name>[4Fe-4S] cluster</name>
        <dbReference type="ChEBI" id="CHEBI:49883"/>
        <label>2</label>
    </ligand>
</feature>
<feature type="binding site" evidence="1">
    <location>
        <position position="109"/>
    </location>
    <ligand>
        <name>[4Fe-4S] cluster</name>
        <dbReference type="ChEBI" id="CHEBI:49883"/>
        <label>1</label>
    </ligand>
</feature>
<gene>
    <name evidence="1" type="primary">nuoI</name>
    <name type="ordered locus">DR_1497</name>
</gene>